<comment type="function">
    <text evidence="1">CRISPR (clustered regularly interspaced short palindromic repeat), is an adaptive immune system that provides protection against mobile genetic elements (viruses, transposable elements and conjugative plasmids). CRISPR clusters contain sequences complementary to antecedent mobile elements and target invading nucleic acids. CRISPR clusters are transcribed and processed into CRISPR RNA (crRNA). Functions as a ssRNA-specific endoribonuclease. Involved in the integration of spacer DNA into the CRISPR cassette.</text>
</comment>
<comment type="cofactor">
    <cofactor evidence="1">
        <name>Mg(2+)</name>
        <dbReference type="ChEBI" id="CHEBI:18420"/>
    </cofactor>
</comment>
<comment type="subunit">
    <text evidence="1">Homodimer, forms a heterotetramer with a Cas1 homodimer.</text>
</comment>
<comment type="similarity">
    <text evidence="1">Belongs to the CRISPR-associated endoribonuclease Cas2 protein family.</text>
</comment>
<accession>Q8F1F4</accession>
<gene>
    <name evidence="1" type="primary">cas2</name>
    <name type="ordered locus">LA_3182</name>
</gene>
<reference key="1">
    <citation type="journal article" date="2003" name="Nature">
        <title>Unique physiological and pathogenic features of Leptospira interrogans revealed by whole-genome sequencing.</title>
        <authorList>
            <person name="Ren S.-X."/>
            <person name="Fu G."/>
            <person name="Jiang X.-G."/>
            <person name="Zeng R."/>
            <person name="Miao Y.-G."/>
            <person name="Xu H."/>
            <person name="Zhang Y.-X."/>
            <person name="Xiong H."/>
            <person name="Lu G."/>
            <person name="Lu L.-F."/>
            <person name="Jiang H.-Q."/>
            <person name="Jia J."/>
            <person name="Tu Y.-F."/>
            <person name="Jiang J.-X."/>
            <person name="Gu W.-Y."/>
            <person name="Zhang Y.-Q."/>
            <person name="Cai Z."/>
            <person name="Sheng H.-H."/>
            <person name="Yin H.-F."/>
            <person name="Zhang Y."/>
            <person name="Zhu G.-F."/>
            <person name="Wan M."/>
            <person name="Huang H.-L."/>
            <person name="Qian Z."/>
            <person name="Wang S.-Y."/>
            <person name="Ma W."/>
            <person name="Yao Z.-J."/>
            <person name="Shen Y."/>
            <person name="Qiang B.-Q."/>
            <person name="Xia Q.-C."/>
            <person name="Guo X.-K."/>
            <person name="Danchin A."/>
            <person name="Saint Girons I."/>
            <person name="Somerville R.L."/>
            <person name="Wen Y.-M."/>
            <person name="Shi M.-H."/>
            <person name="Chen Z."/>
            <person name="Xu J.-G."/>
            <person name="Zhao G.-P."/>
        </authorList>
    </citation>
    <scope>NUCLEOTIDE SEQUENCE [LARGE SCALE GENOMIC DNA]</scope>
    <source>
        <strain>56601</strain>
    </source>
</reference>
<dbReference type="EC" id="3.1.-.-" evidence="1"/>
<dbReference type="EMBL" id="AE010300">
    <property type="protein sequence ID" value="AAN50380.1"/>
    <property type="molecule type" value="Genomic_DNA"/>
</dbReference>
<dbReference type="RefSeq" id="NP_713362.1">
    <property type="nucleotide sequence ID" value="NC_004342.2"/>
</dbReference>
<dbReference type="RefSeq" id="WP_000683530.1">
    <property type="nucleotide sequence ID" value="NC_004342.2"/>
</dbReference>
<dbReference type="SMR" id="Q8F1F4"/>
<dbReference type="STRING" id="189518.LA_3182"/>
<dbReference type="PaxDb" id="189518-LA_3182"/>
<dbReference type="EnsemblBacteria" id="AAN50380">
    <property type="protein sequence ID" value="AAN50380"/>
    <property type="gene ID" value="LA_3182"/>
</dbReference>
<dbReference type="GeneID" id="61144268"/>
<dbReference type="KEGG" id="lil:LA_3182"/>
<dbReference type="PATRIC" id="fig|189518.3.peg.3159"/>
<dbReference type="HOGENOM" id="CLU_161124_3_0_12"/>
<dbReference type="InParanoid" id="Q8F1F4"/>
<dbReference type="OrthoDB" id="9798176at2"/>
<dbReference type="Proteomes" id="UP000001408">
    <property type="component" value="Chromosome I"/>
</dbReference>
<dbReference type="GO" id="GO:0046872">
    <property type="term" value="F:metal ion binding"/>
    <property type="evidence" value="ECO:0007669"/>
    <property type="project" value="UniProtKB-UniRule"/>
</dbReference>
<dbReference type="GO" id="GO:0004521">
    <property type="term" value="F:RNA endonuclease activity"/>
    <property type="evidence" value="ECO:0007669"/>
    <property type="project" value="InterPro"/>
</dbReference>
<dbReference type="GO" id="GO:0051607">
    <property type="term" value="P:defense response to virus"/>
    <property type="evidence" value="ECO:0007669"/>
    <property type="project" value="UniProtKB-UniRule"/>
</dbReference>
<dbReference type="GO" id="GO:0043571">
    <property type="term" value="P:maintenance of CRISPR repeat elements"/>
    <property type="evidence" value="ECO:0007669"/>
    <property type="project" value="UniProtKB-UniRule"/>
</dbReference>
<dbReference type="CDD" id="cd09725">
    <property type="entry name" value="Cas2_I_II_III"/>
    <property type="match status" value="1"/>
</dbReference>
<dbReference type="Gene3D" id="3.30.70.240">
    <property type="match status" value="1"/>
</dbReference>
<dbReference type="HAMAP" id="MF_01471">
    <property type="entry name" value="Cas2"/>
    <property type="match status" value="1"/>
</dbReference>
<dbReference type="InterPro" id="IPR021127">
    <property type="entry name" value="CRISPR_associated_Cas2"/>
</dbReference>
<dbReference type="InterPro" id="IPR019199">
    <property type="entry name" value="Virulence_VapD/CRISPR_Cas2"/>
</dbReference>
<dbReference type="NCBIfam" id="TIGR01573">
    <property type="entry name" value="cas2"/>
    <property type="match status" value="1"/>
</dbReference>
<dbReference type="PANTHER" id="PTHR34405">
    <property type="entry name" value="CRISPR-ASSOCIATED ENDORIBONUCLEASE CAS2"/>
    <property type="match status" value="1"/>
</dbReference>
<dbReference type="PANTHER" id="PTHR34405:SF3">
    <property type="entry name" value="CRISPR-ASSOCIATED ENDORIBONUCLEASE CAS2 3"/>
    <property type="match status" value="1"/>
</dbReference>
<dbReference type="Pfam" id="PF09827">
    <property type="entry name" value="CRISPR_Cas2"/>
    <property type="match status" value="1"/>
</dbReference>
<dbReference type="SUPFAM" id="SSF143430">
    <property type="entry name" value="TTP0101/SSO1404-like"/>
    <property type="match status" value="1"/>
</dbReference>
<keyword id="KW-0051">Antiviral defense</keyword>
<keyword id="KW-0255">Endonuclease</keyword>
<keyword id="KW-0378">Hydrolase</keyword>
<keyword id="KW-0460">Magnesium</keyword>
<keyword id="KW-0479">Metal-binding</keyword>
<keyword id="KW-0540">Nuclease</keyword>
<keyword id="KW-1185">Reference proteome</keyword>
<protein>
    <recommendedName>
        <fullName evidence="1">CRISPR-associated endoribonuclease Cas2</fullName>
        <ecNumber evidence="1">3.1.-.-</ecNumber>
    </recommendedName>
</protein>
<organism>
    <name type="scientific">Leptospira interrogans serogroup Icterohaemorrhagiae serovar Lai (strain 56601)</name>
    <dbReference type="NCBI Taxonomy" id="189518"/>
    <lineage>
        <taxon>Bacteria</taxon>
        <taxon>Pseudomonadati</taxon>
        <taxon>Spirochaetota</taxon>
        <taxon>Spirochaetia</taxon>
        <taxon>Leptospirales</taxon>
        <taxon>Leptospiraceae</taxon>
        <taxon>Leptospira</taxon>
    </lineage>
</organism>
<feature type="chain" id="PRO_0000417718" description="CRISPR-associated endoribonuclease Cas2">
    <location>
        <begin position="1"/>
        <end position="94"/>
    </location>
</feature>
<feature type="binding site" evidence="1">
    <location>
        <position position="10"/>
    </location>
    <ligand>
        <name>Mg(2+)</name>
        <dbReference type="ChEBI" id="CHEBI:18420"/>
        <note>catalytic</note>
    </ligand>
</feature>
<sequence length="94" mass="11233">MKHWRLVSYDIREPKRLRRVAKIMEGFGERIQYSVFRIYSTDKELEKLRWKLAKVTEEEDNIFYLTLCTKCASGAHTQEKKSAWPEAPKTLKIL</sequence>
<name>CAS2_LEPIN</name>
<evidence type="ECO:0000255" key="1">
    <source>
        <dbReference type="HAMAP-Rule" id="MF_01471"/>
    </source>
</evidence>
<proteinExistence type="inferred from homology"/>